<accession>Q664R4</accession>
<comment type="function">
    <text evidence="1">With S4 and S5 plays an important role in translational accuracy.</text>
</comment>
<comment type="function">
    <text evidence="1">Interacts with and stabilizes bases of the 16S rRNA that are involved in tRNA selection in the A site and with the mRNA backbone. Located at the interface of the 30S and 50S subunits, it traverses the body of the 30S subunit contacting proteins on the other side and probably holding the rRNA structure together. The combined cluster of proteins S8, S12 and S17 appears to hold together the shoulder and platform of the 30S subunit.</text>
</comment>
<comment type="subunit">
    <text evidence="1">Part of the 30S ribosomal subunit. Contacts proteins S8 and S17. May interact with IF1 in the 30S initiation complex.</text>
</comment>
<comment type="similarity">
    <text evidence="1">Belongs to the universal ribosomal protein uS12 family.</text>
</comment>
<comment type="caution">
    <text evidence="2">Because the enzyme that would modify Asp-89 to 3-methylthioaspartic acid has not been found in the proteome of this organism, that modification is not predicted.</text>
</comment>
<gene>
    <name evidence="1" type="primary">rpsL</name>
    <name type="ordered locus">YPTB3705</name>
</gene>
<protein>
    <recommendedName>
        <fullName evidence="1">Small ribosomal subunit protein uS12</fullName>
    </recommendedName>
    <alternativeName>
        <fullName evidence="2">30S ribosomal protein S12</fullName>
    </alternativeName>
</protein>
<dbReference type="EMBL" id="BX936398">
    <property type="protein sequence ID" value="CAH22943.1"/>
    <property type="molecule type" value="Genomic_DNA"/>
</dbReference>
<dbReference type="RefSeq" id="WP_002212323.1">
    <property type="nucleotide sequence ID" value="NZ_CP009712.1"/>
</dbReference>
<dbReference type="SMR" id="Q664R4"/>
<dbReference type="GeneID" id="97454224"/>
<dbReference type="KEGG" id="ypo:BZ17_2882"/>
<dbReference type="KEGG" id="yps:YPTB3705"/>
<dbReference type="PATRIC" id="fig|273123.14.peg.3023"/>
<dbReference type="Proteomes" id="UP000001011">
    <property type="component" value="Chromosome"/>
</dbReference>
<dbReference type="GO" id="GO:0015935">
    <property type="term" value="C:small ribosomal subunit"/>
    <property type="evidence" value="ECO:0007669"/>
    <property type="project" value="InterPro"/>
</dbReference>
<dbReference type="GO" id="GO:0019843">
    <property type="term" value="F:rRNA binding"/>
    <property type="evidence" value="ECO:0007669"/>
    <property type="project" value="UniProtKB-UniRule"/>
</dbReference>
<dbReference type="GO" id="GO:0003735">
    <property type="term" value="F:structural constituent of ribosome"/>
    <property type="evidence" value="ECO:0007669"/>
    <property type="project" value="InterPro"/>
</dbReference>
<dbReference type="GO" id="GO:0000049">
    <property type="term" value="F:tRNA binding"/>
    <property type="evidence" value="ECO:0007669"/>
    <property type="project" value="UniProtKB-UniRule"/>
</dbReference>
<dbReference type="GO" id="GO:0006412">
    <property type="term" value="P:translation"/>
    <property type="evidence" value="ECO:0007669"/>
    <property type="project" value="UniProtKB-UniRule"/>
</dbReference>
<dbReference type="CDD" id="cd03368">
    <property type="entry name" value="Ribosomal_S12"/>
    <property type="match status" value="1"/>
</dbReference>
<dbReference type="FunFam" id="2.40.50.140:FF:000001">
    <property type="entry name" value="30S ribosomal protein S12"/>
    <property type="match status" value="1"/>
</dbReference>
<dbReference type="Gene3D" id="2.40.50.140">
    <property type="entry name" value="Nucleic acid-binding proteins"/>
    <property type="match status" value="1"/>
</dbReference>
<dbReference type="HAMAP" id="MF_00403_B">
    <property type="entry name" value="Ribosomal_uS12_B"/>
    <property type="match status" value="1"/>
</dbReference>
<dbReference type="InterPro" id="IPR012340">
    <property type="entry name" value="NA-bd_OB-fold"/>
</dbReference>
<dbReference type="InterPro" id="IPR006032">
    <property type="entry name" value="Ribosomal_uS12"/>
</dbReference>
<dbReference type="InterPro" id="IPR005679">
    <property type="entry name" value="Ribosomal_uS12_bac"/>
</dbReference>
<dbReference type="NCBIfam" id="TIGR00981">
    <property type="entry name" value="rpsL_bact"/>
    <property type="match status" value="1"/>
</dbReference>
<dbReference type="PANTHER" id="PTHR11652">
    <property type="entry name" value="30S RIBOSOMAL PROTEIN S12 FAMILY MEMBER"/>
    <property type="match status" value="1"/>
</dbReference>
<dbReference type="Pfam" id="PF00164">
    <property type="entry name" value="Ribosom_S12_S23"/>
    <property type="match status" value="1"/>
</dbReference>
<dbReference type="PIRSF" id="PIRSF002133">
    <property type="entry name" value="Ribosomal_S12/S23"/>
    <property type="match status" value="1"/>
</dbReference>
<dbReference type="PRINTS" id="PR01034">
    <property type="entry name" value="RIBOSOMALS12"/>
</dbReference>
<dbReference type="SUPFAM" id="SSF50249">
    <property type="entry name" value="Nucleic acid-binding proteins"/>
    <property type="match status" value="1"/>
</dbReference>
<dbReference type="PROSITE" id="PS00055">
    <property type="entry name" value="RIBOSOMAL_S12"/>
    <property type="match status" value="1"/>
</dbReference>
<reference key="1">
    <citation type="journal article" date="2004" name="Proc. Natl. Acad. Sci. U.S.A.">
        <title>Insights into the evolution of Yersinia pestis through whole-genome comparison with Yersinia pseudotuberculosis.</title>
        <authorList>
            <person name="Chain P.S.G."/>
            <person name="Carniel E."/>
            <person name="Larimer F.W."/>
            <person name="Lamerdin J."/>
            <person name="Stoutland P.O."/>
            <person name="Regala W.M."/>
            <person name="Georgescu A.M."/>
            <person name="Vergez L.M."/>
            <person name="Land M.L."/>
            <person name="Motin V.L."/>
            <person name="Brubaker R.R."/>
            <person name="Fowler J."/>
            <person name="Hinnebusch J."/>
            <person name="Marceau M."/>
            <person name="Medigue C."/>
            <person name="Simonet M."/>
            <person name="Chenal-Francisque V."/>
            <person name="Souza B."/>
            <person name="Dacheux D."/>
            <person name="Elliott J.M."/>
            <person name="Derbise A."/>
            <person name="Hauser L.J."/>
            <person name="Garcia E."/>
        </authorList>
    </citation>
    <scope>NUCLEOTIDE SEQUENCE [LARGE SCALE GENOMIC DNA]</scope>
    <source>
        <strain>IP32953</strain>
    </source>
</reference>
<sequence length="124" mass="13730">MATINQLVRKPRSMKVAKSNVPALEACPQKRGVCTRVYTTTPKKPNSALRKVCRVRLTNGFEVTSYIGGEGHNLQEHSVILIRGGRVKDLPGVRYHTVRGALDCSGVKDRKQSRSKYGVKKPKA</sequence>
<proteinExistence type="inferred from homology"/>
<feature type="chain" id="PRO_0000146362" description="Small ribosomal subunit protein uS12">
    <location>
        <begin position="1"/>
        <end position="124"/>
    </location>
</feature>
<name>RS12_YERPS</name>
<organism>
    <name type="scientific">Yersinia pseudotuberculosis serotype I (strain IP32953)</name>
    <dbReference type="NCBI Taxonomy" id="273123"/>
    <lineage>
        <taxon>Bacteria</taxon>
        <taxon>Pseudomonadati</taxon>
        <taxon>Pseudomonadota</taxon>
        <taxon>Gammaproteobacteria</taxon>
        <taxon>Enterobacterales</taxon>
        <taxon>Yersiniaceae</taxon>
        <taxon>Yersinia</taxon>
    </lineage>
</organism>
<keyword id="KW-0687">Ribonucleoprotein</keyword>
<keyword id="KW-0689">Ribosomal protein</keyword>
<keyword id="KW-0694">RNA-binding</keyword>
<keyword id="KW-0699">rRNA-binding</keyword>
<keyword id="KW-0820">tRNA-binding</keyword>
<evidence type="ECO:0000255" key="1">
    <source>
        <dbReference type="HAMAP-Rule" id="MF_00403"/>
    </source>
</evidence>
<evidence type="ECO:0000305" key="2"/>